<gene>
    <name evidence="7" type="primary">Stbd1</name>
    <name type="synonym">D5Ertd593e</name>
</gene>
<protein>
    <recommendedName>
        <fullName evidence="7">Starch-binding domain-containing protein 1</fullName>
    </recommendedName>
    <alternativeName>
        <fullName evidence="7">Genethonin-1</fullName>
    </alternativeName>
    <alternativeName>
        <fullName evidence="8">Glycophagy cargo receptor stbd1</fullName>
    </alternativeName>
</protein>
<dbReference type="EMBL" id="AK050416">
    <property type="protein sequence ID" value="BAC34244.1"/>
    <property type="molecule type" value="mRNA"/>
</dbReference>
<dbReference type="EMBL" id="BC118661">
    <property type="protein sequence ID" value="AAI18662.1"/>
    <property type="molecule type" value="mRNA"/>
</dbReference>
<dbReference type="CCDS" id="CCDS19433.1"/>
<dbReference type="RefSeq" id="NP_780305.1">
    <property type="nucleotide sequence ID" value="NM_175096.3"/>
</dbReference>
<dbReference type="SMR" id="Q8C7E7"/>
<dbReference type="FunCoup" id="Q8C7E7">
    <property type="interactions" value="404"/>
</dbReference>
<dbReference type="IntAct" id="Q8C7E7">
    <property type="interactions" value="1"/>
</dbReference>
<dbReference type="STRING" id="10090.ENSMUSP00000054322"/>
<dbReference type="CAZy" id="CBM20">
    <property type="family name" value="Carbohydrate-Binding Module Family 20"/>
</dbReference>
<dbReference type="iPTMnet" id="Q8C7E7"/>
<dbReference type="PhosphoSitePlus" id="Q8C7E7"/>
<dbReference type="SwissPalm" id="Q8C7E7"/>
<dbReference type="jPOST" id="Q8C7E7"/>
<dbReference type="PaxDb" id="10090-ENSMUSP00000054322"/>
<dbReference type="ProteomicsDB" id="258751"/>
<dbReference type="Antibodypedia" id="2375">
    <property type="antibodies" value="132 antibodies from 26 providers"/>
</dbReference>
<dbReference type="DNASU" id="52331"/>
<dbReference type="Ensembl" id="ENSMUST00000050952.4">
    <property type="protein sequence ID" value="ENSMUSP00000054322.4"/>
    <property type="gene ID" value="ENSMUSG00000047963.8"/>
</dbReference>
<dbReference type="GeneID" id="52331"/>
<dbReference type="KEGG" id="mmu:52331"/>
<dbReference type="UCSC" id="uc008ydp.1">
    <property type="organism name" value="mouse"/>
</dbReference>
<dbReference type="AGR" id="MGI:1261768"/>
<dbReference type="CTD" id="8987"/>
<dbReference type="MGI" id="MGI:1261768">
    <property type="gene designation" value="Stbd1"/>
</dbReference>
<dbReference type="VEuPathDB" id="HostDB:ENSMUSG00000047963"/>
<dbReference type="eggNOG" id="ENOG502SE11">
    <property type="taxonomic scope" value="Eukaryota"/>
</dbReference>
<dbReference type="GeneTree" id="ENSGT00390000007731"/>
<dbReference type="HOGENOM" id="CLU_070592_0_0_1"/>
<dbReference type="InParanoid" id="Q8C7E7"/>
<dbReference type="OMA" id="RADNEDW"/>
<dbReference type="OrthoDB" id="6123450at2759"/>
<dbReference type="PhylomeDB" id="Q8C7E7"/>
<dbReference type="TreeFam" id="TF338505"/>
<dbReference type="Reactome" id="R-MMU-6798695">
    <property type="pathway name" value="Neutrophil degranulation"/>
</dbReference>
<dbReference type="Reactome" id="R-MMU-8980692">
    <property type="pathway name" value="RHOA GTPase cycle"/>
</dbReference>
<dbReference type="Reactome" id="R-MMU-9013404">
    <property type="pathway name" value="RAC2 GTPase cycle"/>
</dbReference>
<dbReference type="Reactome" id="R-MMU-9013405">
    <property type="pathway name" value="RHOD GTPase cycle"/>
</dbReference>
<dbReference type="Reactome" id="R-MMU-9013408">
    <property type="pathway name" value="RHOG GTPase cycle"/>
</dbReference>
<dbReference type="Reactome" id="R-MMU-9013423">
    <property type="pathway name" value="RAC3 GTPase cycle"/>
</dbReference>
<dbReference type="BioGRID-ORCS" id="52331">
    <property type="hits" value="1 hit in 79 CRISPR screens"/>
</dbReference>
<dbReference type="PRO" id="PR:Q8C7E7"/>
<dbReference type="Proteomes" id="UP000000589">
    <property type="component" value="Chromosome 5"/>
</dbReference>
<dbReference type="RNAct" id="Q8C7E7">
    <property type="molecule type" value="protein"/>
</dbReference>
<dbReference type="Bgee" id="ENSMUSG00000047963">
    <property type="expression patterns" value="Expressed in secondary oocyte and 206 other cell types or tissues"/>
</dbReference>
<dbReference type="ExpressionAtlas" id="Q8C7E7">
    <property type="expression patterns" value="baseline and differential"/>
</dbReference>
<dbReference type="GO" id="GO:0005789">
    <property type="term" value="C:endoplasmic reticulum membrane"/>
    <property type="evidence" value="ECO:0007669"/>
    <property type="project" value="UniProtKB-SubCell"/>
</dbReference>
<dbReference type="GO" id="GO:0016020">
    <property type="term" value="C:membrane"/>
    <property type="evidence" value="ECO:0000250"/>
    <property type="project" value="GO_Central"/>
</dbReference>
<dbReference type="GO" id="GO:0048471">
    <property type="term" value="C:perinuclear region of cytoplasm"/>
    <property type="evidence" value="ECO:0000250"/>
    <property type="project" value="GO_Central"/>
</dbReference>
<dbReference type="GO" id="GO:0034045">
    <property type="term" value="C:phagophore assembly site membrane"/>
    <property type="evidence" value="ECO:0007669"/>
    <property type="project" value="UniProtKB-SubCell"/>
</dbReference>
<dbReference type="GO" id="GO:0030315">
    <property type="term" value="C:T-tubule"/>
    <property type="evidence" value="ECO:0007669"/>
    <property type="project" value="UniProtKB-SubCell"/>
</dbReference>
<dbReference type="GO" id="GO:0038024">
    <property type="term" value="F:cargo receptor activity"/>
    <property type="evidence" value="ECO:0000314"/>
    <property type="project" value="MGI"/>
</dbReference>
<dbReference type="GO" id="GO:0019899">
    <property type="term" value="F:enzyme binding"/>
    <property type="evidence" value="ECO:0007669"/>
    <property type="project" value="Ensembl"/>
</dbReference>
<dbReference type="GO" id="GO:2001069">
    <property type="term" value="F:glycogen binding"/>
    <property type="evidence" value="ECO:0000250"/>
    <property type="project" value="GO_Central"/>
</dbReference>
<dbReference type="GO" id="GO:2001070">
    <property type="term" value="F:starch binding"/>
    <property type="evidence" value="ECO:0007669"/>
    <property type="project" value="InterPro"/>
</dbReference>
<dbReference type="GO" id="GO:0005980">
    <property type="term" value="P:glycogen catabolic process"/>
    <property type="evidence" value="ECO:0000250"/>
    <property type="project" value="GO_Central"/>
</dbReference>
<dbReference type="GO" id="GO:0061723">
    <property type="term" value="P:glycophagy"/>
    <property type="evidence" value="ECO:0000315"/>
    <property type="project" value="MGI"/>
</dbReference>
<dbReference type="GO" id="GO:0046907">
    <property type="term" value="P:intracellular transport"/>
    <property type="evidence" value="ECO:0000316"/>
    <property type="project" value="ParkinsonsUK-UCL"/>
</dbReference>
<dbReference type="GO" id="GO:0061753">
    <property type="term" value="P:substrate localization to autophagosome"/>
    <property type="evidence" value="ECO:0000315"/>
    <property type="project" value="MGI"/>
</dbReference>
<dbReference type="CDD" id="cd05813">
    <property type="entry name" value="CBM20_genethonin_1"/>
    <property type="match status" value="1"/>
</dbReference>
<dbReference type="FunFam" id="2.60.40.10:FF:000552">
    <property type="entry name" value="Related to glucoamylase"/>
    <property type="match status" value="1"/>
</dbReference>
<dbReference type="Gene3D" id="2.60.40.10">
    <property type="entry name" value="Immunoglobulins"/>
    <property type="match status" value="1"/>
</dbReference>
<dbReference type="InterPro" id="IPR013784">
    <property type="entry name" value="Carb-bd-like_fold"/>
</dbReference>
<dbReference type="InterPro" id="IPR002044">
    <property type="entry name" value="CBM20"/>
</dbReference>
<dbReference type="InterPro" id="IPR034838">
    <property type="entry name" value="CBM20_genethonin_1"/>
</dbReference>
<dbReference type="InterPro" id="IPR013783">
    <property type="entry name" value="Ig-like_fold"/>
</dbReference>
<dbReference type="PANTHER" id="PTHR15048">
    <property type="entry name" value="STARCH-BINDING DOMAIN-CONTAINING PROTEIN 1"/>
    <property type="match status" value="1"/>
</dbReference>
<dbReference type="PANTHER" id="PTHR15048:SF0">
    <property type="entry name" value="STARCH-BINDING DOMAIN-CONTAINING PROTEIN 1"/>
    <property type="match status" value="1"/>
</dbReference>
<dbReference type="Pfam" id="PF00686">
    <property type="entry name" value="CBM_20"/>
    <property type="match status" value="1"/>
</dbReference>
<dbReference type="SMART" id="SM01065">
    <property type="entry name" value="CBM_2"/>
    <property type="match status" value="1"/>
</dbReference>
<dbReference type="SUPFAM" id="SSF49452">
    <property type="entry name" value="Starch-binding domain-like"/>
    <property type="match status" value="1"/>
</dbReference>
<dbReference type="PROSITE" id="PS51166">
    <property type="entry name" value="CBM20"/>
    <property type="match status" value="1"/>
</dbReference>
<reference key="1">
    <citation type="journal article" date="2005" name="Science">
        <title>The transcriptional landscape of the mammalian genome.</title>
        <authorList>
            <person name="Carninci P."/>
            <person name="Kasukawa T."/>
            <person name="Katayama S."/>
            <person name="Gough J."/>
            <person name="Frith M.C."/>
            <person name="Maeda N."/>
            <person name="Oyama R."/>
            <person name="Ravasi T."/>
            <person name="Lenhard B."/>
            <person name="Wells C."/>
            <person name="Kodzius R."/>
            <person name="Shimokawa K."/>
            <person name="Bajic V.B."/>
            <person name="Brenner S.E."/>
            <person name="Batalov S."/>
            <person name="Forrest A.R."/>
            <person name="Zavolan M."/>
            <person name="Davis M.J."/>
            <person name="Wilming L.G."/>
            <person name="Aidinis V."/>
            <person name="Allen J.E."/>
            <person name="Ambesi-Impiombato A."/>
            <person name="Apweiler R."/>
            <person name="Aturaliya R.N."/>
            <person name="Bailey T.L."/>
            <person name="Bansal M."/>
            <person name="Baxter L."/>
            <person name="Beisel K.W."/>
            <person name="Bersano T."/>
            <person name="Bono H."/>
            <person name="Chalk A.M."/>
            <person name="Chiu K.P."/>
            <person name="Choudhary V."/>
            <person name="Christoffels A."/>
            <person name="Clutterbuck D.R."/>
            <person name="Crowe M.L."/>
            <person name="Dalla E."/>
            <person name="Dalrymple B.P."/>
            <person name="de Bono B."/>
            <person name="Della Gatta G."/>
            <person name="di Bernardo D."/>
            <person name="Down T."/>
            <person name="Engstrom P."/>
            <person name="Fagiolini M."/>
            <person name="Faulkner G."/>
            <person name="Fletcher C.F."/>
            <person name="Fukushima T."/>
            <person name="Furuno M."/>
            <person name="Futaki S."/>
            <person name="Gariboldi M."/>
            <person name="Georgii-Hemming P."/>
            <person name="Gingeras T.R."/>
            <person name="Gojobori T."/>
            <person name="Green R.E."/>
            <person name="Gustincich S."/>
            <person name="Harbers M."/>
            <person name="Hayashi Y."/>
            <person name="Hensch T.K."/>
            <person name="Hirokawa N."/>
            <person name="Hill D."/>
            <person name="Huminiecki L."/>
            <person name="Iacono M."/>
            <person name="Ikeo K."/>
            <person name="Iwama A."/>
            <person name="Ishikawa T."/>
            <person name="Jakt M."/>
            <person name="Kanapin A."/>
            <person name="Katoh M."/>
            <person name="Kawasawa Y."/>
            <person name="Kelso J."/>
            <person name="Kitamura H."/>
            <person name="Kitano H."/>
            <person name="Kollias G."/>
            <person name="Krishnan S.P."/>
            <person name="Kruger A."/>
            <person name="Kummerfeld S.K."/>
            <person name="Kurochkin I.V."/>
            <person name="Lareau L.F."/>
            <person name="Lazarevic D."/>
            <person name="Lipovich L."/>
            <person name="Liu J."/>
            <person name="Liuni S."/>
            <person name="McWilliam S."/>
            <person name="Madan Babu M."/>
            <person name="Madera M."/>
            <person name="Marchionni L."/>
            <person name="Matsuda H."/>
            <person name="Matsuzawa S."/>
            <person name="Miki H."/>
            <person name="Mignone F."/>
            <person name="Miyake S."/>
            <person name="Morris K."/>
            <person name="Mottagui-Tabar S."/>
            <person name="Mulder N."/>
            <person name="Nakano N."/>
            <person name="Nakauchi H."/>
            <person name="Ng P."/>
            <person name="Nilsson R."/>
            <person name="Nishiguchi S."/>
            <person name="Nishikawa S."/>
            <person name="Nori F."/>
            <person name="Ohara O."/>
            <person name="Okazaki Y."/>
            <person name="Orlando V."/>
            <person name="Pang K.C."/>
            <person name="Pavan W.J."/>
            <person name="Pavesi G."/>
            <person name="Pesole G."/>
            <person name="Petrovsky N."/>
            <person name="Piazza S."/>
            <person name="Reed J."/>
            <person name="Reid J.F."/>
            <person name="Ring B.Z."/>
            <person name="Ringwald M."/>
            <person name="Rost B."/>
            <person name="Ruan Y."/>
            <person name="Salzberg S.L."/>
            <person name="Sandelin A."/>
            <person name="Schneider C."/>
            <person name="Schoenbach C."/>
            <person name="Sekiguchi K."/>
            <person name="Semple C.A."/>
            <person name="Seno S."/>
            <person name="Sessa L."/>
            <person name="Sheng Y."/>
            <person name="Shibata Y."/>
            <person name="Shimada H."/>
            <person name="Shimada K."/>
            <person name="Silva D."/>
            <person name="Sinclair B."/>
            <person name="Sperling S."/>
            <person name="Stupka E."/>
            <person name="Sugiura K."/>
            <person name="Sultana R."/>
            <person name="Takenaka Y."/>
            <person name="Taki K."/>
            <person name="Tammoja K."/>
            <person name="Tan S.L."/>
            <person name="Tang S."/>
            <person name="Taylor M.S."/>
            <person name="Tegner J."/>
            <person name="Teichmann S.A."/>
            <person name="Ueda H.R."/>
            <person name="van Nimwegen E."/>
            <person name="Verardo R."/>
            <person name="Wei C.L."/>
            <person name="Yagi K."/>
            <person name="Yamanishi H."/>
            <person name="Zabarovsky E."/>
            <person name="Zhu S."/>
            <person name="Zimmer A."/>
            <person name="Hide W."/>
            <person name="Bult C."/>
            <person name="Grimmond S.M."/>
            <person name="Teasdale R.D."/>
            <person name="Liu E.T."/>
            <person name="Brusic V."/>
            <person name="Quackenbush J."/>
            <person name="Wahlestedt C."/>
            <person name="Mattick J.S."/>
            <person name="Hume D.A."/>
            <person name="Kai C."/>
            <person name="Sasaki D."/>
            <person name="Tomaru Y."/>
            <person name="Fukuda S."/>
            <person name="Kanamori-Katayama M."/>
            <person name="Suzuki M."/>
            <person name="Aoki J."/>
            <person name="Arakawa T."/>
            <person name="Iida J."/>
            <person name="Imamura K."/>
            <person name="Itoh M."/>
            <person name="Kato T."/>
            <person name="Kawaji H."/>
            <person name="Kawagashira N."/>
            <person name="Kawashima T."/>
            <person name="Kojima M."/>
            <person name="Kondo S."/>
            <person name="Konno H."/>
            <person name="Nakano K."/>
            <person name="Ninomiya N."/>
            <person name="Nishio T."/>
            <person name="Okada M."/>
            <person name="Plessy C."/>
            <person name="Shibata K."/>
            <person name="Shiraki T."/>
            <person name="Suzuki S."/>
            <person name="Tagami M."/>
            <person name="Waki K."/>
            <person name="Watahiki A."/>
            <person name="Okamura-Oho Y."/>
            <person name="Suzuki H."/>
            <person name="Kawai J."/>
            <person name="Hayashizaki Y."/>
        </authorList>
    </citation>
    <scope>NUCLEOTIDE SEQUENCE [LARGE SCALE MRNA]</scope>
    <source>
        <strain>C57BL/6J</strain>
        <tissue>Liver</tissue>
    </source>
</reference>
<reference key="2">
    <citation type="journal article" date="2004" name="Genome Res.">
        <title>The status, quality, and expansion of the NIH full-length cDNA project: the Mammalian Gene Collection (MGC).</title>
        <authorList>
            <consortium name="The MGC Project Team"/>
        </authorList>
    </citation>
    <scope>NUCLEOTIDE SEQUENCE [LARGE SCALE MRNA]</scope>
</reference>
<reference key="3">
    <citation type="journal article" date="2007" name="Proc. Natl. Acad. Sci. U.S.A.">
        <title>Large-scale phosphorylation analysis of mouse liver.</title>
        <authorList>
            <person name="Villen J."/>
            <person name="Beausoleil S.A."/>
            <person name="Gerber S.A."/>
            <person name="Gygi S.P."/>
        </authorList>
    </citation>
    <scope>PHOSPHORYLATION [LARGE SCALE ANALYSIS] AT SER-167; SER-196; SER-209 AND SER-220</scope>
    <scope>IDENTIFICATION BY MASS SPECTROMETRY [LARGE SCALE ANALYSIS]</scope>
    <source>
        <tissue>Liver</tissue>
    </source>
</reference>
<reference key="4">
    <citation type="journal article" date="2008" name="J. Proteome Res.">
        <title>Specific phosphopeptide enrichment with immobilized titanium ion affinity chromatography adsorbent for phosphoproteome analysis.</title>
        <authorList>
            <person name="Zhou H."/>
            <person name="Ye M."/>
            <person name="Dong J."/>
            <person name="Han G."/>
            <person name="Jiang X."/>
            <person name="Wu R."/>
            <person name="Zou H."/>
        </authorList>
    </citation>
    <scope>PHOSPHORYLATION [LARGE SCALE ANALYSIS] AT SER-167</scope>
    <scope>IDENTIFICATION BY MASS SPECTROMETRY [LARGE SCALE ANALYSIS]</scope>
    <source>
        <tissue>Liver</tissue>
    </source>
</reference>
<reference key="5">
    <citation type="journal article" date="2010" name="Cell">
        <title>A tissue-specific atlas of mouse protein phosphorylation and expression.</title>
        <authorList>
            <person name="Huttlin E.L."/>
            <person name="Jedrychowski M.P."/>
            <person name="Elias J.E."/>
            <person name="Goswami T."/>
            <person name="Rad R."/>
            <person name="Beausoleil S.A."/>
            <person name="Villen J."/>
            <person name="Haas W."/>
            <person name="Sowa M.E."/>
            <person name="Gygi S.P."/>
        </authorList>
    </citation>
    <scope>PHOSPHORYLATION [LARGE SCALE ANALYSIS] AT SER-167 AND SER-223</scope>
    <scope>IDENTIFICATION BY MASS SPECTROMETRY [LARGE SCALE ANALYSIS]</scope>
    <source>
        <tissue>Brown adipose tissue</tissue>
        <tissue>Heart</tissue>
        <tissue>Kidney</tissue>
        <tissue>Liver</tissue>
        <tissue>Lung</tissue>
        <tissue>Spleen</tissue>
    </source>
</reference>
<reference key="6">
    <citation type="journal article" date="2010" name="J. Biol. Chem.">
        <title>Starch binding domain-containing protein 1/genethonin 1 is a novel participant in glycogen metabolism.</title>
        <authorList>
            <person name="Jiang S."/>
            <person name="Heller B."/>
            <person name="Tagliabracci V.S."/>
            <person name="Zhai L."/>
            <person name="Irimia J.M."/>
            <person name="DePaoli-Roach A.A."/>
            <person name="Wells C.D."/>
            <person name="Skurat A.V."/>
            <person name="Roach P.J."/>
        </authorList>
    </citation>
    <scope>TISSUE SPECIFICITY</scope>
    <scope>SUBCELLULAR LOCATION</scope>
    <scope>DOMAIN</scope>
    <scope>GLYCOGEN-BINDING</scope>
    <scope>FUNCTION</scope>
</reference>
<feature type="chain" id="PRO_0000238961" description="Starch-binding domain-containing protein 1">
    <location>
        <begin position="1"/>
        <end position="338"/>
    </location>
</feature>
<feature type="topological domain" description="Extracellular" evidence="3">
    <location>
        <begin position="1"/>
        <end position="6"/>
    </location>
</feature>
<feature type="transmembrane region" description="Helical" evidence="3">
    <location>
        <begin position="7"/>
        <end position="23"/>
    </location>
</feature>
<feature type="topological domain" description="Cytoplasmic" evidence="3">
    <location>
        <begin position="24"/>
        <end position="338"/>
    </location>
</feature>
<feature type="domain" description="CBM20" evidence="4">
    <location>
        <begin position="238"/>
        <end position="337"/>
    </location>
</feature>
<feature type="region of interest" description="Disordered" evidence="5">
    <location>
        <begin position="30"/>
        <end position="73"/>
    </location>
</feature>
<feature type="region of interest" description="Disordered" evidence="5">
    <location>
        <begin position="120"/>
        <end position="148"/>
    </location>
</feature>
<feature type="short sequence motif" description="LIR" evidence="1">
    <location>
        <begin position="185"/>
        <end position="191"/>
    </location>
</feature>
<feature type="compositionally biased region" description="Low complexity" evidence="5">
    <location>
        <begin position="36"/>
        <end position="52"/>
    </location>
</feature>
<feature type="compositionally biased region" description="Gly residues" evidence="5">
    <location>
        <begin position="53"/>
        <end position="62"/>
    </location>
</feature>
<feature type="compositionally biased region" description="Basic and acidic residues" evidence="5">
    <location>
        <begin position="122"/>
        <end position="132"/>
    </location>
</feature>
<feature type="modified residue" description="Phosphoserine" evidence="2">
    <location>
        <position position="68"/>
    </location>
</feature>
<feature type="modified residue" description="Phosphoserine" evidence="1">
    <location>
        <position position="140"/>
    </location>
</feature>
<feature type="modified residue" description="Phosphoserine" evidence="10 11 12">
    <location>
        <position position="167"/>
    </location>
</feature>
<feature type="modified residue" description="Phosphoserine" evidence="1">
    <location>
        <position position="179"/>
    </location>
</feature>
<feature type="modified residue" description="Phosphoserine" evidence="1">
    <location>
        <position position="195"/>
    </location>
</feature>
<feature type="modified residue" description="Phosphoserine" evidence="10">
    <location>
        <position position="196"/>
    </location>
</feature>
<feature type="modified residue" description="Phosphoserine" evidence="1">
    <location>
        <position position="205"/>
    </location>
</feature>
<feature type="modified residue" description="Phosphoserine" evidence="10">
    <location>
        <position position="209"/>
    </location>
</feature>
<feature type="modified residue" description="Phosphoserine" evidence="2">
    <location>
        <position position="212"/>
    </location>
</feature>
<feature type="modified residue" description="Phosphoserine" evidence="10">
    <location>
        <position position="220"/>
    </location>
</feature>
<feature type="modified residue" description="Phosphoserine" evidence="12">
    <location>
        <position position="223"/>
    </location>
</feature>
<name>STBD1_MOUSE</name>
<sequence>MGAVWSALLVGGGLAGALILWLLRGDSGAPGKDGVAEPPQKGAPPGEAAAPGDGPGGGGSGGLSPEPSDRELVSKAEHLRESNGHLISESKDLGNLPEAQRLQNVGADWVNAREFVPVGKIPDTHSRADSEAARNQSPGSHGGEWRLPKGQETAVKVAGSVAAKLPSSSLLVDRAKAVSQDQAGHEDWEVVSRHSSWGSVGLGGSLEASRLSLNQRMDDSTNSLVGGRGWEVDGKVASLKPQQVSIQFQVHYTTNTDVQFIAVTGDHESLGRWNTYIPLHYCKDGLWSHSVFLPADTVVEWKFVLVENKEVTRWEECSNRFLQTGHEDKVVHGWWGIH</sequence>
<proteinExistence type="evidence at protein level"/>
<evidence type="ECO:0000250" key="1">
    <source>
        <dbReference type="UniProtKB" id="O95210"/>
    </source>
</evidence>
<evidence type="ECO:0000250" key="2">
    <source>
        <dbReference type="UniProtKB" id="Q5FVN1"/>
    </source>
</evidence>
<evidence type="ECO:0000255" key="3"/>
<evidence type="ECO:0000255" key="4">
    <source>
        <dbReference type="PROSITE-ProRule" id="PRU00594"/>
    </source>
</evidence>
<evidence type="ECO:0000256" key="5">
    <source>
        <dbReference type="SAM" id="MobiDB-lite"/>
    </source>
</evidence>
<evidence type="ECO:0000269" key="6">
    <source>
    </source>
</evidence>
<evidence type="ECO:0000303" key="7">
    <source>
    </source>
</evidence>
<evidence type="ECO:0000305" key="8"/>
<evidence type="ECO:0000305" key="9">
    <source>
    </source>
</evidence>
<evidence type="ECO:0007744" key="10">
    <source>
    </source>
</evidence>
<evidence type="ECO:0007744" key="11">
    <source>
    </source>
</evidence>
<evidence type="ECO:0007744" key="12">
    <source>
    </source>
</evidence>
<accession>Q8C7E7</accession>
<accession>Q147T8</accession>
<organism>
    <name type="scientific">Mus musculus</name>
    <name type="common">Mouse</name>
    <dbReference type="NCBI Taxonomy" id="10090"/>
    <lineage>
        <taxon>Eukaryota</taxon>
        <taxon>Metazoa</taxon>
        <taxon>Chordata</taxon>
        <taxon>Craniata</taxon>
        <taxon>Vertebrata</taxon>
        <taxon>Euteleostomi</taxon>
        <taxon>Mammalia</taxon>
        <taxon>Eutheria</taxon>
        <taxon>Euarchontoglires</taxon>
        <taxon>Glires</taxon>
        <taxon>Rodentia</taxon>
        <taxon>Myomorpha</taxon>
        <taxon>Muroidea</taxon>
        <taxon>Muridae</taxon>
        <taxon>Murinae</taxon>
        <taxon>Mus</taxon>
        <taxon>Mus</taxon>
    </lineage>
</organism>
<keyword id="KW-0072">Autophagy</keyword>
<keyword id="KW-0119">Carbohydrate metabolism</keyword>
<keyword id="KW-1003">Cell membrane</keyword>
<keyword id="KW-0256">Endoplasmic reticulum</keyword>
<keyword id="KW-0321">Glycogen metabolism</keyword>
<keyword id="KW-0472">Membrane</keyword>
<keyword id="KW-0597">Phosphoprotein</keyword>
<keyword id="KW-1185">Reference proteome</keyword>
<keyword id="KW-0735">Signal-anchor</keyword>
<keyword id="KW-0812">Transmembrane</keyword>
<keyword id="KW-1133">Transmembrane helix</keyword>
<keyword id="KW-0832">Ubl conjugation</keyword>
<comment type="function">
    <text evidence="1 6">Acts as a cargo receptor for glycogen. Delivers its cargo to an autophagic pathway called glycophagy, resulting in the transport of glycogen to lysosomes.</text>
</comment>
<comment type="subunit">
    <text evidence="1">Interacts with the ATG8 family proteins GABARAP and GABARAPL1 (By similarity). Interacts with several glycogen-associated proteins, such as GYS2 (liver glycogen synthase), GDE (glycogen debranching enzyme), GBE1 (glycogen branching enzyme 1) and EPM2A (Laforin) (By similarity).</text>
</comment>
<comment type="subcellular location">
    <subcellularLocation>
        <location evidence="2 9">Preautophagosomal structure membrane</location>
        <topology evidence="1">Single-pass type III membrane protein</topology>
    </subcellularLocation>
    <subcellularLocation>
        <location evidence="1">Endoplasmic reticulum membrane</location>
        <topology evidence="1">Single-pass type III membrane protein</topology>
    </subcellularLocation>
    <subcellularLocation>
        <location evidence="1">Cell membrane</location>
        <location evidence="1">Sarcolemma</location>
        <location evidence="1">T-tubule</location>
    </subcellularLocation>
    <text evidence="1 6">Also detected near the junctional sarcoplasmic reticulum (By similarity). Concentrates at perinuclear structures (PubMed:20810658).</text>
</comment>
<comment type="tissue specificity">
    <text evidence="6">Expressed at high level in glycogen-accumulating organs such as muscle and liver. Trace signals are also found in brain, kidney, and pancreas.</text>
</comment>
<comment type="domain">
    <text evidence="1">The LIR motif (LC3-interacting region) is required for the interaction with the ATG8 family protein GABARAPL1.</text>
</comment>
<comment type="domain">
    <text evidence="6">The C-terminal CBM20 domain is required for the interaction with glycogen.</text>
</comment>
<comment type="PTM">
    <text evidence="1">Ubiquitinated, which leads to proteasomal degradation.</text>
</comment>